<gene>
    <name type="ordered locus">Lxx25275</name>
</gene>
<organism>
    <name type="scientific">Leifsonia xyli subsp. xyli (strain CTCB07)</name>
    <dbReference type="NCBI Taxonomy" id="281090"/>
    <lineage>
        <taxon>Bacteria</taxon>
        <taxon>Bacillati</taxon>
        <taxon>Actinomycetota</taxon>
        <taxon>Actinomycetes</taxon>
        <taxon>Micrococcales</taxon>
        <taxon>Microbacteriaceae</taxon>
        <taxon>Leifsonia</taxon>
    </lineage>
</organism>
<feature type="chain" id="PRO_0000171834" description="Putative membrane protein insertion efficiency factor">
    <location>
        <begin position="1"/>
        <end position="85"/>
    </location>
</feature>
<comment type="function">
    <text evidence="1">Could be involved in insertion of integral membrane proteins into the membrane.</text>
</comment>
<comment type="subcellular location">
    <subcellularLocation>
        <location evidence="1">Cell membrane</location>
        <topology evidence="1">Peripheral membrane protein</topology>
        <orientation evidence="1">Cytoplasmic side</orientation>
    </subcellularLocation>
</comment>
<comment type="similarity">
    <text evidence="1">Belongs to the UPF0161 family.</text>
</comment>
<reference key="1">
    <citation type="journal article" date="2004" name="Mol. Plant Microbe Interact.">
        <title>The genome sequence of the Gram-positive sugarcane pathogen Leifsonia xyli subsp. xyli.</title>
        <authorList>
            <person name="Monteiro-Vitorello C.B."/>
            <person name="Camargo L.E.A."/>
            <person name="Van Sluys M.A."/>
            <person name="Kitajima J.P."/>
            <person name="Truffi D."/>
            <person name="do Amaral A.M."/>
            <person name="Harakava R."/>
            <person name="de Oliveira J.C.F."/>
            <person name="Wood D."/>
            <person name="de Oliveira M.C."/>
            <person name="Miyaki C.Y."/>
            <person name="Takita M.A."/>
            <person name="da Silva A.C.R."/>
            <person name="Furlan L.R."/>
            <person name="Carraro D.M."/>
            <person name="Camarotte G."/>
            <person name="Almeida N.F. Jr."/>
            <person name="Carrer H."/>
            <person name="Coutinho L.L."/>
            <person name="El-Dorry H.A."/>
            <person name="Ferro M.I.T."/>
            <person name="Gagliardi P.R."/>
            <person name="Giglioti E."/>
            <person name="Goldman M.H.S."/>
            <person name="Goldman G.H."/>
            <person name="Kimura E.T."/>
            <person name="Ferro E.S."/>
            <person name="Kuramae E.E."/>
            <person name="Lemos E.G.M."/>
            <person name="Lemos M.V.F."/>
            <person name="Mauro S.M.Z."/>
            <person name="Machado M.A."/>
            <person name="Marino C.L."/>
            <person name="Menck C.F."/>
            <person name="Nunes L.R."/>
            <person name="Oliveira R.C."/>
            <person name="Pereira G.G."/>
            <person name="Siqueira W."/>
            <person name="de Souza A.A."/>
            <person name="Tsai S.M."/>
            <person name="Zanca A.S."/>
            <person name="Simpson A.J.G."/>
            <person name="Brumbley S.M."/>
            <person name="Setubal J.C."/>
        </authorList>
    </citation>
    <scope>NUCLEOTIDE SEQUENCE [LARGE SCALE GENOMIC DNA]</scope>
    <source>
        <strain>CTCB07</strain>
    </source>
</reference>
<keyword id="KW-1003">Cell membrane</keyword>
<keyword id="KW-0472">Membrane</keyword>
<keyword id="KW-1185">Reference proteome</keyword>
<name>YIDD_LEIXX</name>
<protein>
    <recommendedName>
        <fullName evidence="1">Putative membrane protein insertion efficiency factor</fullName>
    </recommendedName>
</protein>
<accession>Q6ABV4</accession>
<proteinExistence type="inferred from homology"/>
<evidence type="ECO:0000255" key="1">
    <source>
        <dbReference type="HAMAP-Rule" id="MF_00386"/>
    </source>
</evidence>
<dbReference type="EMBL" id="AE016822">
    <property type="protein sequence ID" value="AAT90137.1"/>
    <property type="molecule type" value="Genomic_DNA"/>
</dbReference>
<dbReference type="STRING" id="281090.Lxx25275"/>
<dbReference type="KEGG" id="lxx:Lxx25275"/>
<dbReference type="eggNOG" id="COG0759">
    <property type="taxonomic scope" value="Bacteria"/>
</dbReference>
<dbReference type="HOGENOM" id="CLU_144811_5_0_11"/>
<dbReference type="Proteomes" id="UP000001306">
    <property type="component" value="Chromosome"/>
</dbReference>
<dbReference type="GO" id="GO:0005886">
    <property type="term" value="C:plasma membrane"/>
    <property type="evidence" value="ECO:0007669"/>
    <property type="project" value="UniProtKB-SubCell"/>
</dbReference>
<dbReference type="HAMAP" id="MF_00386">
    <property type="entry name" value="UPF0161_YidD"/>
    <property type="match status" value="1"/>
</dbReference>
<dbReference type="InterPro" id="IPR002696">
    <property type="entry name" value="Membr_insert_effic_factor_YidD"/>
</dbReference>
<dbReference type="NCBIfam" id="TIGR00278">
    <property type="entry name" value="membrane protein insertion efficiency factor YidD"/>
    <property type="match status" value="1"/>
</dbReference>
<dbReference type="PANTHER" id="PTHR33383">
    <property type="entry name" value="MEMBRANE PROTEIN INSERTION EFFICIENCY FACTOR-RELATED"/>
    <property type="match status" value="1"/>
</dbReference>
<dbReference type="PANTHER" id="PTHR33383:SF1">
    <property type="entry name" value="MEMBRANE PROTEIN INSERTION EFFICIENCY FACTOR-RELATED"/>
    <property type="match status" value="1"/>
</dbReference>
<dbReference type="Pfam" id="PF01809">
    <property type="entry name" value="YidD"/>
    <property type="match status" value="1"/>
</dbReference>
<dbReference type="SMART" id="SM01234">
    <property type="entry name" value="Haemolytic"/>
    <property type="match status" value="1"/>
</dbReference>
<sequence length="85" mass="9473">MLRGYRAVFSPFYGDVCRYYPSCSAYTLQAVQEHGVIFGGYLGVCRILRCHPWAAGGVDDVPLRGKRRYRMTAFGFVVATSQGKA</sequence>